<protein>
    <recommendedName>
        <fullName>Long chain base biosynthesis protein 2b</fullName>
        <shortName>AtLCB2b</shortName>
        <ecNumber evidence="5">2.3.1.50</ecNumber>
    </recommendedName>
    <alternativeName>
        <fullName>Serine palmitoyltransferase 1</fullName>
        <shortName>AtSPT1</shortName>
    </alternativeName>
</protein>
<evidence type="ECO:0000250" key="1"/>
<evidence type="ECO:0000255" key="2"/>
<evidence type="ECO:0000269" key="3">
    <source>
    </source>
</evidence>
<evidence type="ECO:0000305" key="4"/>
<evidence type="ECO:0000305" key="5">
    <source>
    </source>
</evidence>
<organism>
    <name type="scientific">Arabidopsis thaliana</name>
    <name type="common">Mouse-ear cress</name>
    <dbReference type="NCBI Taxonomy" id="3702"/>
    <lineage>
        <taxon>Eukaryota</taxon>
        <taxon>Viridiplantae</taxon>
        <taxon>Streptophyta</taxon>
        <taxon>Embryophyta</taxon>
        <taxon>Tracheophyta</taxon>
        <taxon>Spermatophyta</taxon>
        <taxon>Magnoliopsida</taxon>
        <taxon>eudicotyledons</taxon>
        <taxon>Gunneridae</taxon>
        <taxon>Pentapetalae</taxon>
        <taxon>rosids</taxon>
        <taxon>malvids</taxon>
        <taxon>Brassicales</taxon>
        <taxon>Brassicaceae</taxon>
        <taxon>Camelineae</taxon>
        <taxon>Arabidopsis</taxon>
    </lineage>
</organism>
<name>LCB2B_ARATH</name>
<sequence>MITIPYLTAVSTYFSYGLLFAFGQLRDYSRLIFDWWRTNNLQGYAPICLAHEDFYIRRLYHRIQDCFGRPISSAPDAWIDVVERVSDDNNKTLKRTTKTSRCLNLGSYNYLGFGSFDEYCTPRVIESLKKFSASTCSSRVDAGTTSVHAELEDCVAKYVGQPAAVIFGMGYATNSAIIPVLIGKGGLIISDSLNHTSIVNGARGSGATIRVFQHNTPGHLEKVLKEQIAEGQPRTHRPWKKIIVVVEGIYSMEGEICHLPEIVSICKKYKAYVYLDEAHSIGAIGKTGRGVCELLGVDTSDVDIMMGTFTKSFGSCGGYIAGSKDLIQYLKHQCPAHLYATSISTPSATQIISAIKVILGEDGSNRGAQKLARIRENSNFFRAELQKMGFEVLGDNDSPVMPIMLYNPAKIPAFSRECLRENLAVVVVGFPATPLLLARARICISASHSREDLIKALQVISKAGDLTGIKYFPAAPKKQEVEKNGIKLD</sequence>
<comment type="function">
    <text evidence="3">Serine palmitoyltransferase (SPT). The heterodimer formed with LCB1 constitutes the catalytic core. Plays an important role during male gametogenesis and embryogenesis.</text>
</comment>
<comment type="catalytic activity">
    <reaction evidence="5">
        <text>L-serine + hexadecanoyl-CoA + H(+) = 3-oxosphinganine + CO2 + CoA</text>
        <dbReference type="Rhea" id="RHEA:14761"/>
        <dbReference type="ChEBI" id="CHEBI:15378"/>
        <dbReference type="ChEBI" id="CHEBI:16526"/>
        <dbReference type="ChEBI" id="CHEBI:33384"/>
        <dbReference type="ChEBI" id="CHEBI:57287"/>
        <dbReference type="ChEBI" id="CHEBI:57379"/>
        <dbReference type="ChEBI" id="CHEBI:58299"/>
        <dbReference type="EC" id="2.3.1.50"/>
    </reaction>
</comment>
<comment type="cofactor">
    <cofactor evidence="1">
        <name>pyridoxal 5'-phosphate</name>
        <dbReference type="ChEBI" id="CHEBI:597326"/>
    </cofactor>
</comment>
<comment type="pathway">
    <text evidence="5">Lipid metabolism; sphingolipid metabolism.</text>
</comment>
<comment type="subunit">
    <text evidence="3">Heterodimer with LCB1. Component of the serine palmitoyltransferase (SPT) complex, composed of LCB1 and LCB2 (LCB2a or LCB2b).</text>
</comment>
<comment type="subcellular location">
    <subcellularLocation>
        <location evidence="1">Endoplasmic reticulum membrane</location>
        <topology evidence="1">Single-pass membrane protein</topology>
    </subcellularLocation>
</comment>
<comment type="tissue specificity">
    <text evidence="3">Ubiquitous with the highest expression in flowers.</text>
</comment>
<comment type="developmental stage">
    <text evidence="3">In young flower buds was initially restricted to developing pollen spores within the stamen and is not detected in the petals, glumes or petiole until the flowers are mature.</text>
</comment>
<comment type="disruption phenotype">
    <text evidence="3">No visible phenotype. Lcb2a and lcb2b double mutant is not viable due to pollen lethality.</text>
</comment>
<comment type="similarity">
    <text evidence="4">Belongs to the class-II pyridoxal-phosphate-dependent aminotransferase family.</text>
</comment>
<gene>
    <name type="primary">LCB2b</name>
    <name type="synonym">LCB2.2</name>
    <name type="synonym">SPT1</name>
    <name type="ordered locus">At3g48780</name>
    <name type="ORF">T21J18_50</name>
</gene>
<feature type="chain" id="PRO_0000419146" description="Long chain base biosynthesis protein 2b">
    <location>
        <begin position="1"/>
        <end position="489"/>
    </location>
</feature>
<feature type="transmembrane region" description="Helical" evidence="2">
    <location>
        <begin position="2"/>
        <end position="22"/>
    </location>
</feature>
<feature type="modified residue" description="N6-(pyridoxal phosphate)lysine" evidence="1">
    <location>
        <position position="311"/>
    </location>
</feature>
<accession>Q9M304</accession>
<accession>Q0WMY9</accession>
<proteinExistence type="evidence at protein level"/>
<reference key="1">
    <citation type="submission" date="2001-11" db="EMBL/GenBank/DDBJ databases">
        <title>A gene for serine palmitoyltransferase in Arabidopsis.</title>
        <authorList>
            <person name="Matsumura M."/>
            <person name="Mori J."/>
            <person name="Imai H."/>
        </authorList>
    </citation>
    <scope>NUCLEOTIDE SEQUENCE [MRNA]</scope>
</reference>
<reference key="2">
    <citation type="journal article" date="2000" name="Nature">
        <title>Sequence and analysis of chromosome 3 of the plant Arabidopsis thaliana.</title>
        <authorList>
            <person name="Salanoubat M."/>
            <person name="Lemcke K."/>
            <person name="Rieger M."/>
            <person name="Ansorge W."/>
            <person name="Unseld M."/>
            <person name="Fartmann B."/>
            <person name="Valle G."/>
            <person name="Bloecker H."/>
            <person name="Perez-Alonso M."/>
            <person name="Obermaier B."/>
            <person name="Delseny M."/>
            <person name="Boutry M."/>
            <person name="Grivell L.A."/>
            <person name="Mache R."/>
            <person name="Puigdomenech P."/>
            <person name="De Simone V."/>
            <person name="Choisne N."/>
            <person name="Artiguenave F."/>
            <person name="Robert C."/>
            <person name="Brottier P."/>
            <person name="Wincker P."/>
            <person name="Cattolico L."/>
            <person name="Weissenbach J."/>
            <person name="Saurin W."/>
            <person name="Quetier F."/>
            <person name="Schaefer M."/>
            <person name="Mueller-Auer S."/>
            <person name="Gabel C."/>
            <person name="Fuchs M."/>
            <person name="Benes V."/>
            <person name="Wurmbach E."/>
            <person name="Drzonek H."/>
            <person name="Erfle H."/>
            <person name="Jordan N."/>
            <person name="Bangert S."/>
            <person name="Wiedelmann R."/>
            <person name="Kranz H."/>
            <person name="Voss H."/>
            <person name="Holland R."/>
            <person name="Brandt P."/>
            <person name="Nyakatura G."/>
            <person name="Vezzi A."/>
            <person name="D'Angelo M."/>
            <person name="Pallavicini A."/>
            <person name="Toppo S."/>
            <person name="Simionati B."/>
            <person name="Conrad A."/>
            <person name="Hornischer K."/>
            <person name="Kauer G."/>
            <person name="Loehnert T.-H."/>
            <person name="Nordsiek G."/>
            <person name="Reichelt J."/>
            <person name="Scharfe M."/>
            <person name="Schoen O."/>
            <person name="Bargues M."/>
            <person name="Terol J."/>
            <person name="Climent J."/>
            <person name="Navarro P."/>
            <person name="Collado C."/>
            <person name="Perez-Perez A."/>
            <person name="Ottenwaelder B."/>
            <person name="Duchemin D."/>
            <person name="Cooke R."/>
            <person name="Laudie M."/>
            <person name="Berger-Llauro C."/>
            <person name="Purnelle B."/>
            <person name="Masuy D."/>
            <person name="de Haan M."/>
            <person name="Maarse A.C."/>
            <person name="Alcaraz J.-P."/>
            <person name="Cottet A."/>
            <person name="Casacuberta E."/>
            <person name="Monfort A."/>
            <person name="Argiriou A."/>
            <person name="Flores M."/>
            <person name="Liguori R."/>
            <person name="Vitale D."/>
            <person name="Mannhaupt G."/>
            <person name="Haase D."/>
            <person name="Schoof H."/>
            <person name="Rudd S."/>
            <person name="Zaccaria P."/>
            <person name="Mewes H.-W."/>
            <person name="Mayer K.F.X."/>
            <person name="Kaul S."/>
            <person name="Town C.D."/>
            <person name="Koo H.L."/>
            <person name="Tallon L.J."/>
            <person name="Jenkins J."/>
            <person name="Rooney T."/>
            <person name="Rizzo M."/>
            <person name="Walts A."/>
            <person name="Utterback T."/>
            <person name="Fujii C.Y."/>
            <person name="Shea T.P."/>
            <person name="Creasy T.H."/>
            <person name="Haas B."/>
            <person name="Maiti R."/>
            <person name="Wu D."/>
            <person name="Peterson J."/>
            <person name="Van Aken S."/>
            <person name="Pai G."/>
            <person name="Militscher J."/>
            <person name="Sellers P."/>
            <person name="Gill J.E."/>
            <person name="Feldblyum T.V."/>
            <person name="Preuss D."/>
            <person name="Lin X."/>
            <person name="Nierman W.C."/>
            <person name="Salzberg S.L."/>
            <person name="White O."/>
            <person name="Venter J.C."/>
            <person name="Fraser C.M."/>
            <person name="Kaneko T."/>
            <person name="Nakamura Y."/>
            <person name="Sato S."/>
            <person name="Kato T."/>
            <person name="Asamizu E."/>
            <person name="Sasamoto S."/>
            <person name="Kimura T."/>
            <person name="Idesawa K."/>
            <person name="Kawashima K."/>
            <person name="Kishida Y."/>
            <person name="Kiyokawa C."/>
            <person name="Kohara M."/>
            <person name="Matsumoto M."/>
            <person name="Matsuno A."/>
            <person name="Muraki A."/>
            <person name="Nakayama S."/>
            <person name="Nakazaki N."/>
            <person name="Shinpo S."/>
            <person name="Takeuchi C."/>
            <person name="Wada T."/>
            <person name="Watanabe A."/>
            <person name="Yamada M."/>
            <person name="Yasuda M."/>
            <person name="Tabata S."/>
        </authorList>
    </citation>
    <scope>NUCLEOTIDE SEQUENCE [LARGE SCALE GENOMIC DNA]</scope>
    <source>
        <strain>cv. Columbia</strain>
    </source>
</reference>
<reference key="3">
    <citation type="journal article" date="2017" name="Plant J.">
        <title>Araport11: a complete reannotation of the Arabidopsis thaliana reference genome.</title>
        <authorList>
            <person name="Cheng C.Y."/>
            <person name="Krishnakumar V."/>
            <person name="Chan A.P."/>
            <person name="Thibaud-Nissen F."/>
            <person name="Schobel S."/>
            <person name="Town C.D."/>
        </authorList>
    </citation>
    <scope>GENOME REANNOTATION</scope>
    <source>
        <strain>cv. Columbia</strain>
    </source>
</reference>
<reference key="4">
    <citation type="journal article" date="2003" name="Science">
        <title>Empirical analysis of transcriptional activity in the Arabidopsis genome.</title>
        <authorList>
            <person name="Yamada K."/>
            <person name="Lim J."/>
            <person name="Dale J.M."/>
            <person name="Chen H."/>
            <person name="Shinn P."/>
            <person name="Palm C.J."/>
            <person name="Southwick A.M."/>
            <person name="Wu H.C."/>
            <person name="Kim C.J."/>
            <person name="Nguyen M."/>
            <person name="Pham P.K."/>
            <person name="Cheuk R.F."/>
            <person name="Karlin-Newmann G."/>
            <person name="Liu S.X."/>
            <person name="Lam B."/>
            <person name="Sakano H."/>
            <person name="Wu T."/>
            <person name="Yu G."/>
            <person name="Miranda M."/>
            <person name="Quach H.L."/>
            <person name="Tripp M."/>
            <person name="Chang C.H."/>
            <person name="Lee J.M."/>
            <person name="Toriumi M.J."/>
            <person name="Chan M.M."/>
            <person name="Tang C.C."/>
            <person name="Onodera C.S."/>
            <person name="Deng J.M."/>
            <person name="Akiyama K."/>
            <person name="Ansari Y."/>
            <person name="Arakawa T."/>
            <person name="Banh J."/>
            <person name="Banno F."/>
            <person name="Bowser L."/>
            <person name="Brooks S.Y."/>
            <person name="Carninci P."/>
            <person name="Chao Q."/>
            <person name="Choy N."/>
            <person name="Enju A."/>
            <person name="Goldsmith A.D."/>
            <person name="Gurjal M."/>
            <person name="Hansen N.F."/>
            <person name="Hayashizaki Y."/>
            <person name="Johnson-Hopson C."/>
            <person name="Hsuan V.W."/>
            <person name="Iida K."/>
            <person name="Karnes M."/>
            <person name="Khan S."/>
            <person name="Koesema E."/>
            <person name="Ishida J."/>
            <person name="Jiang P.X."/>
            <person name="Jones T."/>
            <person name="Kawai J."/>
            <person name="Kamiya A."/>
            <person name="Meyers C."/>
            <person name="Nakajima M."/>
            <person name="Narusaka M."/>
            <person name="Seki M."/>
            <person name="Sakurai T."/>
            <person name="Satou M."/>
            <person name="Tamse R."/>
            <person name="Vaysberg M."/>
            <person name="Wallender E.K."/>
            <person name="Wong C."/>
            <person name="Yamamura Y."/>
            <person name="Yuan S."/>
            <person name="Shinozaki K."/>
            <person name="Davis R.W."/>
            <person name="Theologis A."/>
            <person name="Ecker J.R."/>
        </authorList>
    </citation>
    <scope>NUCLEOTIDE SEQUENCE [LARGE SCALE MRNA]</scope>
    <source>
        <strain>cv. Columbia</strain>
    </source>
</reference>
<reference key="5">
    <citation type="submission" date="2006-07" db="EMBL/GenBank/DDBJ databases">
        <title>Large-scale analysis of RIKEN Arabidopsis full-length (RAFL) cDNAs.</title>
        <authorList>
            <person name="Totoki Y."/>
            <person name="Seki M."/>
            <person name="Ishida J."/>
            <person name="Nakajima M."/>
            <person name="Enju A."/>
            <person name="Kamiya A."/>
            <person name="Narusaka M."/>
            <person name="Shin-i T."/>
            <person name="Nakagawa M."/>
            <person name="Sakamoto N."/>
            <person name="Oishi K."/>
            <person name="Kohara Y."/>
            <person name="Kobayashi M."/>
            <person name="Toyoda A."/>
            <person name="Sakaki Y."/>
            <person name="Sakurai T."/>
            <person name="Iida K."/>
            <person name="Akiyama K."/>
            <person name="Satou M."/>
            <person name="Toyoda T."/>
            <person name="Konagaya A."/>
            <person name="Carninci P."/>
            <person name="Kawai J."/>
            <person name="Hayashizaki Y."/>
            <person name="Shinozaki K."/>
        </authorList>
    </citation>
    <scope>NUCLEOTIDE SEQUENCE [LARGE SCALE MRNA] OF 244-489</scope>
    <source>
        <strain>cv. Columbia</strain>
    </source>
</reference>
<reference key="6">
    <citation type="journal article" date="2008" name="Plant J.">
        <title>Loss-of-function mutations and inducible RNAi suppression of Arabidopsis LCB2 genes reveal the critical role of sphingolipids in gametophytic and sporophytic cell viability.</title>
        <authorList>
            <person name="Dietrich C.R."/>
            <person name="Han G."/>
            <person name="Chen M."/>
            <person name="Berg R.H."/>
            <person name="Dunn T.M."/>
            <person name="Cahoon E.B."/>
        </authorList>
    </citation>
    <scope>FUNCTION</scope>
    <scope>CATALYTIC ACTIVITY</scope>
    <scope>DISRUPTION PHENOTYPE</scope>
    <scope>TISSUE SPECIFICITY</scope>
    <scope>DEVELOPMENTAL STAGE</scope>
    <scope>SUBUNIT</scope>
</reference>
<keyword id="KW-0012">Acyltransferase</keyword>
<keyword id="KW-0256">Endoplasmic reticulum</keyword>
<keyword id="KW-0443">Lipid metabolism</keyword>
<keyword id="KW-0472">Membrane</keyword>
<keyword id="KW-0663">Pyridoxal phosphate</keyword>
<keyword id="KW-1185">Reference proteome</keyword>
<keyword id="KW-0746">Sphingolipid metabolism</keyword>
<keyword id="KW-0808">Transferase</keyword>
<keyword id="KW-0812">Transmembrane</keyword>
<keyword id="KW-1133">Transmembrane helix</keyword>
<dbReference type="EC" id="2.3.1.50" evidence="5"/>
<dbReference type="EMBL" id="AB074928">
    <property type="protein sequence ID" value="BAB78461.1"/>
    <property type="molecule type" value="mRNA"/>
</dbReference>
<dbReference type="EMBL" id="AL132963">
    <property type="protein sequence ID" value="CAB87906.1"/>
    <property type="molecule type" value="Genomic_DNA"/>
</dbReference>
<dbReference type="EMBL" id="CP002686">
    <property type="protein sequence ID" value="AEE78455.1"/>
    <property type="molecule type" value="Genomic_DNA"/>
</dbReference>
<dbReference type="EMBL" id="CP002686">
    <property type="protein sequence ID" value="ANM63778.1"/>
    <property type="molecule type" value="Genomic_DNA"/>
</dbReference>
<dbReference type="EMBL" id="AY054489">
    <property type="protein sequence ID" value="AAK96680.1"/>
    <property type="molecule type" value="mRNA"/>
</dbReference>
<dbReference type="EMBL" id="AY059882">
    <property type="protein sequence ID" value="AAL24364.1"/>
    <property type="molecule type" value="mRNA"/>
</dbReference>
<dbReference type="EMBL" id="AY114662">
    <property type="protein sequence ID" value="AAM47981.1"/>
    <property type="molecule type" value="mRNA"/>
</dbReference>
<dbReference type="EMBL" id="BT006615">
    <property type="protein sequence ID" value="AAP31959.1"/>
    <property type="molecule type" value="mRNA"/>
</dbReference>
<dbReference type="EMBL" id="AK229667">
    <property type="protein sequence ID" value="BAF01511.1"/>
    <property type="molecule type" value="mRNA"/>
</dbReference>
<dbReference type="PIR" id="T49274">
    <property type="entry name" value="T49274"/>
</dbReference>
<dbReference type="RefSeq" id="NP_001325849.1">
    <property type="nucleotide sequence ID" value="NM_001339379.1"/>
</dbReference>
<dbReference type="RefSeq" id="NP_190447.1">
    <property type="nucleotide sequence ID" value="NM_114737.5"/>
</dbReference>
<dbReference type="SMR" id="Q9M304"/>
<dbReference type="FunCoup" id="Q9M304">
    <property type="interactions" value="2576"/>
</dbReference>
<dbReference type="STRING" id="3702.Q9M304"/>
<dbReference type="PaxDb" id="3702-AT3G48780.1"/>
<dbReference type="ProteomicsDB" id="237131"/>
<dbReference type="EnsemblPlants" id="AT3G48780.1">
    <property type="protein sequence ID" value="AT3G48780.1"/>
    <property type="gene ID" value="AT3G48780"/>
</dbReference>
<dbReference type="EnsemblPlants" id="AT3G48780.2">
    <property type="protein sequence ID" value="AT3G48780.2"/>
    <property type="gene ID" value="AT3G48780"/>
</dbReference>
<dbReference type="GeneID" id="824039"/>
<dbReference type="Gramene" id="AT3G48780.1">
    <property type="protein sequence ID" value="AT3G48780.1"/>
    <property type="gene ID" value="AT3G48780"/>
</dbReference>
<dbReference type="Gramene" id="AT3G48780.2">
    <property type="protein sequence ID" value="AT3G48780.2"/>
    <property type="gene ID" value="AT3G48780"/>
</dbReference>
<dbReference type="KEGG" id="ath:AT3G48780"/>
<dbReference type="Araport" id="AT3G48780"/>
<dbReference type="TAIR" id="AT3G48780">
    <property type="gene designation" value="SPT1"/>
</dbReference>
<dbReference type="eggNOG" id="KOG1357">
    <property type="taxonomic scope" value="Eukaryota"/>
</dbReference>
<dbReference type="HOGENOM" id="CLU_015846_7_0_1"/>
<dbReference type="InParanoid" id="Q9M304"/>
<dbReference type="OMA" id="RMMSGHT"/>
<dbReference type="PhylomeDB" id="Q9M304"/>
<dbReference type="BioCyc" id="ARA:AT3G48780-MONOMER"/>
<dbReference type="UniPathway" id="UPA00222"/>
<dbReference type="PRO" id="PR:Q9M304"/>
<dbReference type="Proteomes" id="UP000006548">
    <property type="component" value="Chromosome 3"/>
</dbReference>
<dbReference type="ExpressionAtlas" id="Q9M304">
    <property type="expression patterns" value="baseline and differential"/>
</dbReference>
<dbReference type="GO" id="GO:0005789">
    <property type="term" value="C:endoplasmic reticulum membrane"/>
    <property type="evidence" value="ECO:0007669"/>
    <property type="project" value="UniProtKB-SubCell"/>
</dbReference>
<dbReference type="GO" id="GO:0030170">
    <property type="term" value="F:pyridoxal phosphate binding"/>
    <property type="evidence" value="ECO:0007669"/>
    <property type="project" value="InterPro"/>
</dbReference>
<dbReference type="GO" id="GO:0004758">
    <property type="term" value="F:serine C-palmitoyltransferase activity"/>
    <property type="evidence" value="ECO:0000316"/>
    <property type="project" value="UniProtKB"/>
</dbReference>
<dbReference type="GO" id="GO:0009640">
    <property type="term" value="P:photomorphogenesis"/>
    <property type="evidence" value="ECO:0000315"/>
    <property type="project" value="TAIR"/>
</dbReference>
<dbReference type="GO" id="GO:0009555">
    <property type="term" value="P:pollen development"/>
    <property type="evidence" value="ECO:0000315"/>
    <property type="project" value="TAIR"/>
</dbReference>
<dbReference type="GO" id="GO:0030148">
    <property type="term" value="P:sphingolipid biosynthetic process"/>
    <property type="evidence" value="ECO:0000315"/>
    <property type="project" value="TAIR"/>
</dbReference>
<dbReference type="CDD" id="cd06454">
    <property type="entry name" value="KBL_like"/>
    <property type="match status" value="1"/>
</dbReference>
<dbReference type="Gene3D" id="3.90.1150.10">
    <property type="entry name" value="Aspartate Aminotransferase, domain 1"/>
    <property type="match status" value="1"/>
</dbReference>
<dbReference type="Gene3D" id="3.40.640.10">
    <property type="entry name" value="Type I PLP-dependent aspartate aminotransferase-like (Major domain)"/>
    <property type="match status" value="1"/>
</dbReference>
<dbReference type="InterPro" id="IPR001917">
    <property type="entry name" value="Aminotrans_II_pyridoxalP_BS"/>
</dbReference>
<dbReference type="InterPro" id="IPR004839">
    <property type="entry name" value="Aminotransferase_I/II_large"/>
</dbReference>
<dbReference type="InterPro" id="IPR050087">
    <property type="entry name" value="AON_synthase_class-II"/>
</dbReference>
<dbReference type="InterPro" id="IPR015424">
    <property type="entry name" value="PyrdxlP-dep_Trfase"/>
</dbReference>
<dbReference type="InterPro" id="IPR015421">
    <property type="entry name" value="PyrdxlP-dep_Trfase_major"/>
</dbReference>
<dbReference type="InterPro" id="IPR015422">
    <property type="entry name" value="PyrdxlP-dep_Trfase_small"/>
</dbReference>
<dbReference type="PANTHER" id="PTHR13693">
    <property type="entry name" value="CLASS II AMINOTRANSFERASE/8-AMINO-7-OXONONANOATE SYNTHASE"/>
    <property type="match status" value="1"/>
</dbReference>
<dbReference type="PANTHER" id="PTHR13693:SF3">
    <property type="entry name" value="LD36009P"/>
    <property type="match status" value="1"/>
</dbReference>
<dbReference type="Pfam" id="PF00155">
    <property type="entry name" value="Aminotran_1_2"/>
    <property type="match status" value="1"/>
</dbReference>
<dbReference type="SUPFAM" id="SSF53383">
    <property type="entry name" value="PLP-dependent transferases"/>
    <property type="match status" value="1"/>
</dbReference>
<dbReference type="PROSITE" id="PS00599">
    <property type="entry name" value="AA_TRANSFER_CLASS_2"/>
    <property type="match status" value="1"/>
</dbReference>